<comment type="function">
    <text evidence="3">2/mitotic-specific cyclin essential for the control of the cell cycle at the G2/M (mitosis) transition. G2/M cyclins accumulate steadily during G2 and are abruptly destroyed at mitosis. Degradation is necessary for the cell to exit from mitosis. Plays a role in morphogenesis by negatively regulating polarized growth. Through binding to CDC28 regulates cytokinesis, partly by phosphorylation of the actomyosin ring component IQG1.</text>
</comment>
<comment type="subunit">
    <text evidence="4">Interacts with IQG1.</text>
</comment>
<comment type="induction">
    <text evidence="3 5">Expressed from S phase through G2 and M phases and is degraded at the end of mitosis. Expression is down-regulated by the anti-fungal agent plagiochin E (PLE).</text>
</comment>
<comment type="similarity">
    <text evidence="6">Belongs to the cyclin family. Cyclin AB subfamily.</text>
</comment>
<keyword id="KW-0131">Cell cycle</keyword>
<keyword id="KW-0132">Cell division</keyword>
<keyword id="KW-0175">Coiled coil</keyword>
<keyword id="KW-0195">Cyclin</keyword>
<keyword id="KW-0498">Mitosis</keyword>
<keyword id="KW-1185">Reference proteome</keyword>
<reference key="1">
    <citation type="journal article" date="2004" name="Proc. Natl. Acad. Sci. U.S.A.">
        <title>The diploid genome sequence of Candida albicans.</title>
        <authorList>
            <person name="Jones T."/>
            <person name="Federspiel N.A."/>
            <person name="Chibana H."/>
            <person name="Dungan J."/>
            <person name="Kalman S."/>
            <person name="Magee B.B."/>
            <person name="Newport G."/>
            <person name="Thorstenson Y.R."/>
            <person name="Agabian N."/>
            <person name="Magee P.T."/>
            <person name="Davis R.W."/>
            <person name="Scherer S."/>
        </authorList>
    </citation>
    <scope>NUCLEOTIDE SEQUENCE [LARGE SCALE GENOMIC DNA]</scope>
    <source>
        <strain>SC5314 / ATCC MYA-2876</strain>
    </source>
</reference>
<reference key="2">
    <citation type="journal article" date="2007" name="Genome Biol.">
        <title>Assembly of the Candida albicans genome into sixteen supercontigs aligned on the eight chromosomes.</title>
        <authorList>
            <person name="van het Hoog M."/>
            <person name="Rast T.J."/>
            <person name="Martchenko M."/>
            <person name="Grindle S."/>
            <person name="Dignard D."/>
            <person name="Hogues H."/>
            <person name="Cuomo C."/>
            <person name="Berriman M."/>
            <person name="Scherer S."/>
            <person name="Magee B.B."/>
            <person name="Whiteway M."/>
            <person name="Chibana H."/>
            <person name="Nantel A."/>
            <person name="Magee P.T."/>
        </authorList>
    </citation>
    <scope>GENOME REANNOTATION</scope>
    <source>
        <strain>SC5314 / ATCC MYA-2876</strain>
    </source>
</reference>
<reference key="3">
    <citation type="journal article" date="2013" name="Genome Biol.">
        <title>Assembly of a phased diploid Candida albicans genome facilitates allele-specific measurements and provides a simple model for repeat and indel structure.</title>
        <authorList>
            <person name="Muzzey D."/>
            <person name="Schwartz K."/>
            <person name="Weissman J.S."/>
            <person name="Sherlock G."/>
        </authorList>
    </citation>
    <scope>NUCLEOTIDE SEQUENCE [LARGE SCALE GENOMIC DNA]</scope>
    <scope>GENOME REANNOTATION</scope>
    <source>
        <strain>SC5314 / ATCC MYA-2876</strain>
    </source>
</reference>
<reference key="4">
    <citation type="journal article" date="2005" name="Mol. Biol. Cell">
        <title>The mitotic cyclins Clb2p and Clb4p affect morphogenesis in Candida albicans.</title>
        <authorList>
            <person name="Bensen E.S."/>
            <person name="Clemente-Blanco A."/>
            <person name="Finley K.R."/>
            <person name="Correa-Bordes J."/>
            <person name="Berman J."/>
        </authorList>
    </citation>
    <scope>INDUCTION</scope>
    <scope>FUNCTION</scope>
</reference>
<reference key="5">
    <citation type="journal article" date="2008" name="EMBO J.">
        <title>The IQGAP Iqg1 is a regulatory target of CDK for cytokinesis in Candida albicans.</title>
        <authorList>
            <person name="Li C.R."/>
            <person name="Wang Y.M."/>
            <person name="Wang Y."/>
        </authorList>
    </citation>
    <scope>INTERACTION WITH IQG1</scope>
</reference>
<reference key="6">
    <citation type="journal article" date="2010" name="Biochim. Biophys. Acta">
        <title>Plagiochin E, an antifungal active macrocyclic bis(bibenzyl), induced apoptosis in Candida albicans through a metacaspase-dependent apoptotic pathway.</title>
        <authorList>
            <person name="Wu X.Z."/>
            <person name="Chang W.Q."/>
            <person name="Cheng A.X."/>
            <person name="Sun L.M."/>
            <person name="Lou H.X."/>
        </authorList>
    </citation>
    <scope>INDUCTION</scope>
</reference>
<proteinExistence type="evidence at protein level"/>
<feature type="chain" id="PRO_0000424605" description="G2/mitotic-specific cyclin-4">
    <location>
        <begin position="1"/>
        <end position="486"/>
    </location>
</feature>
<feature type="domain" description="Cyclin N-terminal">
    <location>
        <begin position="234"/>
        <end position="359"/>
    </location>
</feature>
<feature type="region of interest" description="Disordered" evidence="2">
    <location>
        <begin position="1"/>
        <end position="80"/>
    </location>
</feature>
<feature type="region of interest" description="Disordered" evidence="2">
    <location>
        <begin position="105"/>
        <end position="126"/>
    </location>
</feature>
<feature type="coiled-coil region" evidence="1">
    <location>
        <begin position="122"/>
        <end position="184"/>
    </location>
</feature>
<feature type="compositionally biased region" description="Polar residues" evidence="2">
    <location>
        <begin position="25"/>
        <end position="41"/>
    </location>
</feature>
<feature type="compositionally biased region" description="Acidic residues" evidence="2">
    <location>
        <begin position="108"/>
        <end position="123"/>
    </location>
</feature>
<name>CG24_CANAL</name>
<dbReference type="EMBL" id="CP017629">
    <property type="protein sequence ID" value="AOW30733.1"/>
    <property type="molecule type" value="Genomic_DNA"/>
</dbReference>
<dbReference type="RefSeq" id="XP_715235.1">
    <property type="nucleotide sequence ID" value="XM_710142.1"/>
</dbReference>
<dbReference type="SMR" id="Q5A0A9"/>
<dbReference type="BioGRID" id="1226196">
    <property type="interactions" value="2"/>
</dbReference>
<dbReference type="FunCoup" id="Q5A0A9">
    <property type="interactions" value="1903"/>
</dbReference>
<dbReference type="IntAct" id="Q5A0A9">
    <property type="interactions" value="1"/>
</dbReference>
<dbReference type="MINT" id="Q5A0A9"/>
<dbReference type="STRING" id="237561.Q5A0A9"/>
<dbReference type="EnsemblFungi" id="C7_03940C_A-T">
    <property type="protein sequence ID" value="C7_03940C_A-T-p1"/>
    <property type="gene ID" value="C7_03940C_A"/>
</dbReference>
<dbReference type="GeneID" id="3643102"/>
<dbReference type="KEGG" id="cal:CAALFM_C703940CA"/>
<dbReference type="CGD" id="CAL0000175354">
    <property type="gene designation" value="CLB4"/>
</dbReference>
<dbReference type="VEuPathDB" id="FungiDB:C7_03940C_A"/>
<dbReference type="eggNOG" id="KOG0653">
    <property type="taxonomic scope" value="Eukaryota"/>
</dbReference>
<dbReference type="HOGENOM" id="CLU_020695_12_0_1"/>
<dbReference type="InParanoid" id="Q5A0A9"/>
<dbReference type="OMA" id="ENIMHEY"/>
<dbReference type="OrthoDB" id="5590282at2759"/>
<dbReference type="Proteomes" id="UP000000559">
    <property type="component" value="Chromosome 7"/>
</dbReference>
<dbReference type="GO" id="GO:0000307">
    <property type="term" value="C:cyclin-dependent protein kinase holoenzyme complex"/>
    <property type="evidence" value="ECO:0000318"/>
    <property type="project" value="GO_Central"/>
</dbReference>
<dbReference type="GO" id="GO:0005737">
    <property type="term" value="C:cytoplasm"/>
    <property type="evidence" value="ECO:0000318"/>
    <property type="project" value="GO_Central"/>
</dbReference>
<dbReference type="GO" id="GO:0005815">
    <property type="term" value="C:microtubule organizing center"/>
    <property type="evidence" value="ECO:0000318"/>
    <property type="project" value="GO_Central"/>
</dbReference>
<dbReference type="GO" id="GO:0005634">
    <property type="term" value="C:nucleus"/>
    <property type="evidence" value="ECO:0000318"/>
    <property type="project" value="GO_Central"/>
</dbReference>
<dbReference type="GO" id="GO:0016538">
    <property type="term" value="F:cyclin-dependent protein serine/threonine kinase regulator activity"/>
    <property type="evidence" value="ECO:0000315"/>
    <property type="project" value="CGD"/>
</dbReference>
<dbReference type="GO" id="GO:0051301">
    <property type="term" value="P:cell division"/>
    <property type="evidence" value="ECO:0007669"/>
    <property type="project" value="UniProtKB-KW"/>
</dbReference>
<dbReference type="GO" id="GO:0030447">
    <property type="term" value="P:filamentous growth"/>
    <property type="evidence" value="ECO:0000315"/>
    <property type="project" value="CGD"/>
</dbReference>
<dbReference type="GO" id="GO:0000082">
    <property type="term" value="P:G1/S transition of mitotic cell cycle"/>
    <property type="evidence" value="ECO:0000318"/>
    <property type="project" value="GO_Central"/>
</dbReference>
<dbReference type="GO" id="GO:0007346">
    <property type="term" value="P:regulation of mitotic cell cycle"/>
    <property type="evidence" value="ECO:0000315"/>
    <property type="project" value="CGD"/>
</dbReference>
<dbReference type="CDD" id="cd20512">
    <property type="entry name" value="CYCLIN_CLBs_yeast_rpt2"/>
    <property type="match status" value="1"/>
</dbReference>
<dbReference type="FunFam" id="1.10.472.10:FF:000001">
    <property type="entry name" value="G2/mitotic-specific cyclin"/>
    <property type="match status" value="1"/>
</dbReference>
<dbReference type="Gene3D" id="1.10.472.10">
    <property type="entry name" value="Cyclin-like"/>
    <property type="match status" value="2"/>
</dbReference>
<dbReference type="InterPro" id="IPR039361">
    <property type="entry name" value="Cyclin"/>
</dbReference>
<dbReference type="InterPro" id="IPR013763">
    <property type="entry name" value="Cyclin-like_dom"/>
</dbReference>
<dbReference type="InterPro" id="IPR036915">
    <property type="entry name" value="Cyclin-like_sf"/>
</dbReference>
<dbReference type="InterPro" id="IPR046965">
    <property type="entry name" value="Cyclin_A/B-like"/>
</dbReference>
<dbReference type="InterPro" id="IPR004367">
    <property type="entry name" value="Cyclin_C-dom"/>
</dbReference>
<dbReference type="InterPro" id="IPR006671">
    <property type="entry name" value="Cyclin_N"/>
</dbReference>
<dbReference type="InterPro" id="IPR048258">
    <property type="entry name" value="Cyclins_cyclin-box"/>
</dbReference>
<dbReference type="PANTHER" id="PTHR10177">
    <property type="entry name" value="CYCLINS"/>
    <property type="match status" value="1"/>
</dbReference>
<dbReference type="Pfam" id="PF02984">
    <property type="entry name" value="Cyclin_C"/>
    <property type="match status" value="1"/>
</dbReference>
<dbReference type="Pfam" id="PF00134">
    <property type="entry name" value="Cyclin_N"/>
    <property type="match status" value="1"/>
</dbReference>
<dbReference type="PIRSF" id="PIRSF001771">
    <property type="entry name" value="Cyclin_A_B_D_E"/>
    <property type="match status" value="1"/>
</dbReference>
<dbReference type="SMART" id="SM00385">
    <property type="entry name" value="CYCLIN"/>
    <property type="match status" value="2"/>
</dbReference>
<dbReference type="SMART" id="SM01332">
    <property type="entry name" value="Cyclin_C"/>
    <property type="match status" value="1"/>
</dbReference>
<dbReference type="SUPFAM" id="SSF47954">
    <property type="entry name" value="Cyclin-like"/>
    <property type="match status" value="2"/>
</dbReference>
<dbReference type="PROSITE" id="PS00292">
    <property type="entry name" value="CYCLINS"/>
    <property type="match status" value="1"/>
</dbReference>
<evidence type="ECO:0000255" key="1"/>
<evidence type="ECO:0000256" key="2">
    <source>
        <dbReference type="SAM" id="MobiDB-lite"/>
    </source>
</evidence>
<evidence type="ECO:0000269" key="3">
    <source>
    </source>
</evidence>
<evidence type="ECO:0000269" key="4">
    <source>
    </source>
</evidence>
<evidence type="ECO:0000269" key="5">
    <source>
    </source>
</evidence>
<evidence type="ECO:0000305" key="6"/>
<gene>
    <name type="primary">CLB4</name>
    <name type="synonym">CYB2</name>
    <name type="ordered locus">CAALFM_C703940CA</name>
    <name type="ORF">CaO19.7186</name>
</gene>
<organism>
    <name type="scientific">Candida albicans (strain SC5314 / ATCC MYA-2876)</name>
    <name type="common">Yeast</name>
    <dbReference type="NCBI Taxonomy" id="237561"/>
    <lineage>
        <taxon>Eukaryota</taxon>
        <taxon>Fungi</taxon>
        <taxon>Dikarya</taxon>
        <taxon>Ascomycota</taxon>
        <taxon>Saccharomycotina</taxon>
        <taxon>Pichiomycetes</taxon>
        <taxon>Debaryomycetaceae</taxon>
        <taxon>Candida/Lodderomyces clade</taxon>
        <taxon>Candida</taxon>
    </lineage>
</organism>
<sequence length="486" mass="57249">MRSYKSSITDENELTKQRLRAKSIANLSSNHTTAGQPSTSSQHREALTDLTSQENKNHPRVKLTQTNTNHHRNSSSSSNKIQIYQQIEQKKTDIHQFKKPRLEKVLLNDDDDETDDEFDDEEDKENRYHDLELNEDDSKHQLISEAFETIDDRGISEGENDTAQEARERLEEETQSHTQDMRSIYGVHVPMQPMWNNAIINELKYVIQKYSRNTLDENDEDTYDTTMVAEYSPEIFNYLHELENKFTPDPNYMDFQDDLKWEMRAVLIDWVVQVHARFNLFSETLYLTVNYIDRFLSKRRVSLSRFQLVGAVALFIAAKYEEINCPTVQEIAYMADNAYSIDEFLKAERFMIDVLEFDLGWPGPMSFLRRISKADDYDYETRTLAKYFLEITIMDSKFVASPPSWLAAGAHYISRILLGRGEWTELHVFYSGYTEKQLQPLADVLLENCRHAEINHKAIFEKYKERRYRKSSLFVQEYFRHIMSQS</sequence>
<accession>Q5A0A9</accession>
<accession>A0A1D8PRH5</accession>
<accession>Q3MNW4</accession>
<protein>
    <recommendedName>
        <fullName>G2/mitotic-specific cyclin-4</fullName>
    </recommendedName>
</protein>